<sequence>MQQRRPVRRALLSVSDKAGIVEFAQALSARGVELLSTGGTARLLAEKGLPVTEVSDYTGFPEMMDGRVKTLHPKVHGGILGRRGQDDAIMEEHQIQPIDMVVVNLYPFAQTVAREGCSLEDAVENIDIGGPTMVRSAAKNHKDVAIVVKSSDYDAIIKEMDDNEGSLTLATRFDLAIKAFEHTAAYDSMIANYFGSMVPAYHGESKEAAGRFPRTLNLNFIKKQDMRYGENSHQQAAFYIEENVKEASVATATQVQGKALSYNNIADTDAALECVKEFAEPACVIVKHANPCGVAIGNSILDAYDRAYKTDPTSAFGGIIAFNRELDAESAQAIISRQFVEVIIAPSASEEALKITAAKQNVRVLTCGQWGERVPGLDFKRVNGGLLVQDRDLGMVGAEELRVVTQRQPTEQELRDALFCWKVAKFVKSNAIVYAKNNMTIGIGAGQMSRVYSAKIAGIKAADEGLEVKGSSMASDAFFPFRDGIDAAAAAGVTCVIQPGGSIRDDEVIAAADEHGIAMLFTDMRHFRH</sequence>
<organism>
    <name type="scientific">Escherichia coli O9:H4 (strain HS)</name>
    <dbReference type="NCBI Taxonomy" id="331112"/>
    <lineage>
        <taxon>Bacteria</taxon>
        <taxon>Pseudomonadati</taxon>
        <taxon>Pseudomonadota</taxon>
        <taxon>Gammaproteobacteria</taxon>
        <taxon>Enterobacterales</taxon>
        <taxon>Enterobacteriaceae</taxon>
        <taxon>Escherichia</taxon>
    </lineage>
</organism>
<proteinExistence type="inferred from homology"/>
<dbReference type="EC" id="2.1.2.3" evidence="1"/>
<dbReference type="EC" id="3.5.4.10" evidence="1"/>
<dbReference type="EMBL" id="CP000802">
    <property type="protein sequence ID" value="ABV08410.1"/>
    <property type="molecule type" value="Genomic_DNA"/>
</dbReference>
<dbReference type="RefSeq" id="WP_001187562.1">
    <property type="nucleotide sequence ID" value="NC_009800.1"/>
</dbReference>
<dbReference type="SMR" id="A8A7A6"/>
<dbReference type="KEGG" id="ecx:EcHS_A4240"/>
<dbReference type="HOGENOM" id="CLU_016316_5_2_6"/>
<dbReference type="UniPathway" id="UPA00074">
    <property type="reaction ID" value="UER00133"/>
</dbReference>
<dbReference type="UniPathway" id="UPA00074">
    <property type="reaction ID" value="UER00135"/>
</dbReference>
<dbReference type="GO" id="GO:0005829">
    <property type="term" value="C:cytosol"/>
    <property type="evidence" value="ECO:0007669"/>
    <property type="project" value="TreeGrafter"/>
</dbReference>
<dbReference type="GO" id="GO:0003937">
    <property type="term" value="F:IMP cyclohydrolase activity"/>
    <property type="evidence" value="ECO:0007669"/>
    <property type="project" value="UniProtKB-UniRule"/>
</dbReference>
<dbReference type="GO" id="GO:0004643">
    <property type="term" value="F:phosphoribosylaminoimidazolecarboxamide formyltransferase activity"/>
    <property type="evidence" value="ECO:0007669"/>
    <property type="project" value="UniProtKB-UniRule"/>
</dbReference>
<dbReference type="GO" id="GO:0006189">
    <property type="term" value="P:'de novo' IMP biosynthetic process"/>
    <property type="evidence" value="ECO:0007669"/>
    <property type="project" value="UniProtKB-UniRule"/>
</dbReference>
<dbReference type="CDD" id="cd01421">
    <property type="entry name" value="IMPCH"/>
    <property type="match status" value="1"/>
</dbReference>
<dbReference type="FunFam" id="3.40.140.20:FF:000001">
    <property type="entry name" value="Bifunctional purine biosynthesis protein PurH"/>
    <property type="match status" value="1"/>
</dbReference>
<dbReference type="FunFam" id="3.40.140.20:FF:000002">
    <property type="entry name" value="Bifunctional purine biosynthesis protein PurH"/>
    <property type="match status" value="1"/>
</dbReference>
<dbReference type="FunFam" id="3.40.50.1380:FF:000001">
    <property type="entry name" value="Bifunctional purine biosynthesis protein PurH"/>
    <property type="match status" value="1"/>
</dbReference>
<dbReference type="Gene3D" id="3.40.140.20">
    <property type="match status" value="2"/>
</dbReference>
<dbReference type="Gene3D" id="3.40.50.1380">
    <property type="entry name" value="Methylglyoxal synthase-like domain"/>
    <property type="match status" value="1"/>
</dbReference>
<dbReference type="HAMAP" id="MF_00139">
    <property type="entry name" value="PurH"/>
    <property type="match status" value="1"/>
</dbReference>
<dbReference type="InterPro" id="IPR024051">
    <property type="entry name" value="AICAR_Tfase_dup_dom_sf"/>
</dbReference>
<dbReference type="InterPro" id="IPR016193">
    <property type="entry name" value="Cytidine_deaminase-like"/>
</dbReference>
<dbReference type="InterPro" id="IPR011607">
    <property type="entry name" value="MGS-like_dom"/>
</dbReference>
<dbReference type="InterPro" id="IPR036914">
    <property type="entry name" value="MGS-like_dom_sf"/>
</dbReference>
<dbReference type="InterPro" id="IPR002695">
    <property type="entry name" value="PurH-like"/>
</dbReference>
<dbReference type="NCBIfam" id="NF002049">
    <property type="entry name" value="PRK00881.1"/>
    <property type="match status" value="1"/>
</dbReference>
<dbReference type="NCBIfam" id="TIGR00355">
    <property type="entry name" value="purH"/>
    <property type="match status" value="1"/>
</dbReference>
<dbReference type="PANTHER" id="PTHR11692:SF0">
    <property type="entry name" value="BIFUNCTIONAL PURINE BIOSYNTHESIS PROTEIN ATIC"/>
    <property type="match status" value="1"/>
</dbReference>
<dbReference type="PANTHER" id="PTHR11692">
    <property type="entry name" value="BIFUNCTIONAL PURINE BIOSYNTHESIS PROTEIN PURH"/>
    <property type="match status" value="1"/>
</dbReference>
<dbReference type="Pfam" id="PF01808">
    <property type="entry name" value="AICARFT_IMPCHas"/>
    <property type="match status" value="1"/>
</dbReference>
<dbReference type="Pfam" id="PF02142">
    <property type="entry name" value="MGS"/>
    <property type="match status" value="1"/>
</dbReference>
<dbReference type="PIRSF" id="PIRSF000414">
    <property type="entry name" value="AICARFT_IMPCHas"/>
    <property type="match status" value="1"/>
</dbReference>
<dbReference type="SMART" id="SM00798">
    <property type="entry name" value="AICARFT_IMPCHas"/>
    <property type="match status" value="1"/>
</dbReference>
<dbReference type="SMART" id="SM00851">
    <property type="entry name" value="MGS"/>
    <property type="match status" value="1"/>
</dbReference>
<dbReference type="SUPFAM" id="SSF53927">
    <property type="entry name" value="Cytidine deaminase-like"/>
    <property type="match status" value="1"/>
</dbReference>
<dbReference type="SUPFAM" id="SSF52335">
    <property type="entry name" value="Methylglyoxal synthase-like"/>
    <property type="match status" value="1"/>
</dbReference>
<dbReference type="PROSITE" id="PS51855">
    <property type="entry name" value="MGS"/>
    <property type="match status" value="1"/>
</dbReference>
<gene>
    <name evidence="1" type="primary">purH</name>
    <name type="ordered locus">EcHS_A4240</name>
</gene>
<comment type="catalytic activity">
    <reaction evidence="1">
        <text>(6R)-10-formyltetrahydrofolate + 5-amino-1-(5-phospho-beta-D-ribosyl)imidazole-4-carboxamide = 5-formamido-1-(5-phospho-D-ribosyl)imidazole-4-carboxamide + (6S)-5,6,7,8-tetrahydrofolate</text>
        <dbReference type="Rhea" id="RHEA:22192"/>
        <dbReference type="ChEBI" id="CHEBI:57453"/>
        <dbReference type="ChEBI" id="CHEBI:58467"/>
        <dbReference type="ChEBI" id="CHEBI:58475"/>
        <dbReference type="ChEBI" id="CHEBI:195366"/>
        <dbReference type="EC" id="2.1.2.3"/>
    </reaction>
</comment>
<comment type="catalytic activity">
    <reaction evidence="1">
        <text>IMP + H2O = 5-formamido-1-(5-phospho-D-ribosyl)imidazole-4-carboxamide</text>
        <dbReference type="Rhea" id="RHEA:18445"/>
        <dbReference type="ChEBI" id="CHEBI:15377"/>
        <dbReference type="ChEBI" id="CHEBI:58053"/>
        <dbReference type="ChEBI" id="CHEBI:58467"/>
        <dbReference type="EC" id="3.5.4.10"/>
    </reaction>
</comment>
<comment type="pathway">
    <text evidence="1">Purine metabolism; IMP biosynthesis via de novo pathway; 5-formamido-1-(5-phospho-D-ribosyl)imidazole-4-carboxamide from 5-amino-1-(5-phospho-D-ribosyl)imidazole-4-carboxamide (10-formyl THF route): step 1/1.</text>
</comment>
<comment type="pathway">
    <text evidence="1">Purine metabolism; IMP biosynthesis via de novo pathway; IMP from 5-formamido-1-(5-phospho-D-ribosyl)imidazole-4-carboxamide: step 1/1.</text>
</comment>
<comment type="domain">
    <text evidence="1">The IMP cyclohydrolase activity resides in the N-terminal region.</text>
</comment>
<comment type="similarity">
    <text evidence="1">Belongs to the PurH family.</text>
</comment>
<protein>
    <recommendedName>
        <fullName evidence="1">Bifunctional purine biosynthesis protein PurH</fullName>
    </recommendedName>
    <domain>
        <recommendedName>
            <fullName evidence="1">Phosphoribosylaminoimidazolecarboxamide formyltransferase</fullName>
            <ecNumber evidence="1">2.1.2.3</ecNumber>
        </recommendedName>
        <alternativeName>
            <fullName evidence="1">AICAR transformylase</fullName>
        </alternativeName>
    </domain>
    <domain>
        <recommendedName>
            <fullName evidence="1">IMP cyclohydrolase</fullName>
            <ecNumber evidence="1">3.5.4.10</ecNumber>
        </recommendedName>
        <alternativeName>
            <fullName evidence="1">ATIC</fullName>
        </alternativeName>
        <alternativeName>
            <fullName evidence="1">IMP synthase</fullName>
        </alternativeName>
        <alternativeName>
            <fullName evidence="1">Inosinicase</fullName>
        </alternativeName>
    </domain>
</protein>
<feature type="chain" id="PRO_1000057895" description="Bifunctional purine biosynthesis protein PurH">
    <location>
        <begin position="1"/>
        <end position="529"/>
    </location>
</feature>
<feature type="domain" description="MGS-like" evidence="2">
    <location>
        <begin position="1"/>
        <end position="148"/>
    </location>
</feature>
<feature type="modified residue" description="N6-acetyllysine" evidence="1">
    <location>
        <position position="287"/>
    </location>
</feature>
<keyword id="KW-0007">Acetylation</keyword>
<keyword id="KW-0378">Hydrolase</keyword>
<keyword id="KW-0511">Multifunctional enzyme</keyword>
<keyword id="KW-0658">Purine biosynthesis</keyword>
<keyword id="KW-0808">Transferase</keyword>
<reference key="1">
    <citation type="journal article" date="2008" name="J. Bacteriol.">
        <title>The pangenome structure of Escherichia coli: comparative genomic analysis of E. coli commensal and pathogenic isolates.</title>
        <authorList>
            <person name="Rasko D.A."/>
            <person name="Rosovitz M.J."/>
            <person name="Myers G.S.A."/>
            <person name="Mongodin E.F."/>
            <person name="Fricke W.F."/>
            <person name="Gajer P."/>
            <person name="Crabtree J."/>
            <person name="Sebaihia M."/>
            <person name="Thomson N.R."/>
            <person name="Chaudhuri R."/>
            <person name="Henderson I.R."/>
            <person name="Sperandio V."/>
            <person name="Ravel J."/>
        </authorList>
    </citation>
    <scope>NUCLEOTIDE SEQUENCE [LARGE SCALE GENOMIC DNA]</scope>
    <source>
        <strain>HS</strain>
    </source>
</reference>
<accession>A8A7A6</accession>
<evidence type="ECO:0000255" key="1">
    <source>
        <dbReference type="HAMAP-Rule" id="MF_00139"/>
    </source>
</evidence>
<evidence type="ECO:0000255" key="2">
    <source>
        <dbReference type="PROSITE-ProRule" id="PRU01202"/>
    </source>
</evidence>
<name>PUR9_ECOHS</name>